<accession>Q8DUN9</accession>
<comment type="similarity">
    <text evidence="1">Belongs to the bacterial ribosomal protein bS16 family.</text>
</comment>
<reference key="1">
    <citation type="journal article" date="2002" name="Proc. Natl. Acad. Sci. U.S.A.">
        <title>Genome sequence of Streptococcus mutans UA159, a cariogenic dental pathogen.</title>
        <authorList>
            <person name="Ajdic D.J."/>
            <person name="McShan W.M."/>
            <person name="McLaughlin R.E."/>
            <person name="Savic G."/>
            <person name="Chang J."/>
            <person name="Carson M.B."/>
            <person name="Primeaux C."/>
            <person name="Tian R."/>
            <person name="Kenton S."/>
            <person name="Jia H.G."/>
            <person name="Lin S.P."/>
            <person name="Qian Y."/>
            <person name="Li S."/>
            <person name="Zhu H."/>
            <person name="Najar F.Z."/>
            <person name="Lai H."/>
            <person name="White J."/>
            <person name="Roe B.A."/>
            <person name="Ferretti J.J."/>
        </authorList>
    </citation>
    <scope>NUCLEOTIDE SEQUENCE [LARGE SCALE GENOMIC DNA]</scope>
    <source>
        <strain>ATCC 700610 / UA159</strain>
    </source>
</reference>
<dbReference type="EMBL" id="AE014133">
    <property type="protein sequence ID" value="AAN58580.1"/>
    <property type="molecule type" value="Genomic_DNA"/>
</dbReference>
<dbReference type="RefSeq" id="NP_721274.1">
    <property type="nucleotide sequence ID" value="NC_004350.2"/>
</dbReference>
<dbReference type="RefSeq" id="WP_002262013.1">
    <property type="nucleotide sequence ID" value="NC_004350.2"/>
</dbReference>
<dbReference type="SMR" id="Q8DUN9"/>
<dbReference type="STRING" id="210007.SMU_865"/>
<dbReference type="GeneID" id="93859606"/>
<dbReference type="KEGG" id="smu:SMU_865"/>
<dbReference type="PATRIC" id="fig|210007.7.peg.771"/>
<dbReference type="eggNOG" id="COG0228">
    <property type="taxonomic scope" value="Bacteria"/>
</dbReference>
<dbReference type="HOGENOM" id="CLU_100590_5_0_9"/>
<dbReference type="OrthoDB" id="9807878at2"/>
<dbReference type="PhylomeDB" id="Q8DUN9"/>
<dbReference type="Proteomes" id="UP000002512">
    <property type="component" value="Chromosome"/>
</dbReference>
<dbReference type="GO" id="GO:0005737">
    <property type="term" value="C:cytoplasm"/>
    <property type="evidence" value="ECO:0007669"/>
    <property type="project" value="UniProtKB-ARBA"/>
</dbReference>
<dbReference type="GO" id="GO:0015935">
    <property type="term" value="C:small ribosomal subunit"/>
    <property type="evidence" value="ECO:0007669"/>
    <property type="project" value="TreeGrafter"/>
</dbReference>
<dbReference type="GO" id="GO:0003735">
    <property type="term" value="F:structural constituent of ribosome"/>
    <property type="evidence" value="ECO:0007669"/>
    <property type="project" value="InterPro"/>
</dbReference>
<dbReference type="GO" id="GO:0006412">
    <property type="term" value="P:translation"/>
    <property type="evidence" value="ECO:0007669"/>
    <property type="project" value="UniProtKB-UniRule"/>
</dbReference>
<dbReference type="FunFam" id="3.30.1320.10:FF:000002">
    <property type="entry name" value="30S ribosomal protein S16"/>
    <property type="match status" value="1"/>
</dbReference>
<dbReference type="Gene3D" id="3.30.1320.10">
    <property type="match status" value="1"/>
</dbReference>
<dbReference type="HAMAP" id="MF_00385">
    <property type="entry name" value="Ribosomal_bS16"/>
    <property type="match status" value="1"/>
</dbReference>
<dbReference type="InterPro" id="IPR000307">
    <property type="entry name" value="Ribosomal_bS16"/>
</dbReference>
<dbReference type="InterPro" id="IPR023803">
    <property type="entry name" value="Ribosomal_bS16_dom_sf"/>
</dbReference>
<dbReference type="NCBIfam" id="TIGR00002">
    <property type="entry name" value="S16"/>
    <property type="match status" value="1"/>
</dbReference>
<dbReference type="PANTHER" id="PTHR12919">
    <property type="entry name" value="30S RIBOSOMAL PROTEIN S16"/>
    <property type="match status" value="1"/>
</dbReference>
<dbReference type="PANTHER" id="PTHR12919:SF20">
    <property type="entry name" value="SMALL RIBOSOMAL SUBUNIT PROTEIN BS16M"/>
    <property type="match status" value="1"/>
</dbReference>
<dbReference type="Pfam" id="PF00886">
    <property type="entry name" value="Ribosomal_S16"/>
    <property type="match status" value="1"/>
</dbReference>
<dbReference type="SUPFAM" id="SSF54565">
    <property type="entry name" value="Ribosomal protein S16"/>
    <property type="match status" value="1"/>
</dbReference>
<gene>
    <name evidence="1" type="primary">rpsP</name>
    <name type="ordered locus">SMU_865</name>
</gene>
<evidence type="ECO:0000255" key="1">
    <source>
        <dbReference type="HAMAP-Rule" id="MF_00385"/>
    </source>
</evidence>
<evidence type="ECO:0000305" key="2"/>
<organism>
    <name type="scientific">Streptococcus mutans serotype c (strain ATCC 700610 / UA159)</name>
    <dbReference type="NCBI Taxonomy" id="210007"/>
    <lineage>
        <taxon>Bacteria</taxon>
        <taxon>Bacillati</taxon>
        <taxon>Bacillota</taxon>
        <taxon>Bacilli</taxon>
        <taxon>Lactobacillales</taxon>
        <taxon>Streptococcaceae</taxon>
        <taxon>Streptococcus</taxon>
    </lineage>
</organism>
<protein>
    <recommendedName>
        <fullName evidence="1">Small ribosomal subunit protein bS16</fullName>
    </recommendedName>
    <alternativeName>
        <fullName evidence="2">30S ribosomal protein S16</fullName>
    </alternativeName>
</protein>
<proteinExistence type="inferred from homology"/>
<keyword id="KW-1185">Reference proteome</keyword>
<keyword id="KW-0687">Ribonucleoprotein</keyword>
<keyword id="KW-0689">Ribosomal protein</keyword>
<name>RS16_STRMU</name>
<sequence>MAVKIRLTRMGSKKKPFYRINVADSRAPRDGRFIETVGTYNPLVTENQVTLKEDRILEWLGNGAQPSDTVRNILSKAGIMQKFHEAKYSKK</sequence>
<feature type="chain" id="PRO_0000167256" description="Small ribosomal subunit protein bS16">
    <location>
        <begin position="1"/>
        <end position="91"/>
    </location>
</feature>